<keyword id="KW-1003">Cell membrane</keyword>
<keyword id="KW-0449">Lipoprotein</keyword>
<keyword id="KW-0472">Membrane</keyword>
<keyword id="KW-0564">Palmitate</keyword>
<keyword id="KW-1185">Reference proteome</keyword>
<keyword id="KW-0732">Signal</keyword>
<protein>
    <recommendedName>
        <fullName>Uncharacterized lipoprotein MPN_459</fullName>
    </recommendedName>
</protein>
<gene>
    <name type="ordered locus">MPN_459</name>
    <name type="ORF">H08_orf591</name>
    <name type="ORF">MP382</name>
</gene>
<reference key="1">
    <citation type="journal article" date="1996" name="Nucleic Acids Res.">
        <title>Complete sequence analysis of the genome of the bacterium Mycoplasma pneumoniae.</title>
        <authorList>
            <person name="Himmelreich R."/>
            <person name="Hilbert H."/>
            <person name="Plagens H."/>
            <person name="Pirkl E."/>
            <person name="Li B.-C."/>
            <person name="Herrmann R."/>
        </authorList>
    </citation>
    <scope>NUCLEOTIDE SEQUENCE [LARGE SCALE GENOMIC DNA]</scope>
    <source>
        <strain>ATCC 29342 / M129 / Subtype 1</strain>
    </source>
</reference>
<feature type="signal peptide" evidence="1">
    <location>
        <begin position="1"/>
        <end position="24"/>
    </location>
</feature>
<feature type="chain" id="PRO_0000014061" description="Uncharacterized lipoprotein MPN_459">
    <location>
        <begin position="25"/>
        <end position="569"/>
    </location>
</feature>
<feature type="region of interest" description="Disordered" evidence="2">
    <location>
        <begin position="111"/>
        <end position="137"/>
    </location>
</feature>
<feature type="region of interest" description="Disordered" evidence="2">
    <location>
        <begin position="242"/>
        <end position="267"/>
    </location>
</feature>
<feature type="compositionally biased region" description="Low complexity" evidence="2">
    <location>
        <begin position="119"/>
        <end position="130"/>
    </location>
</feature>
<feature type="compositionally biased region" description="Low complexity" evidence="2">
    <location>
        <begin position="249"/>
        <end position="260"/>
    </location>
</feature>
<feature type="lipid moiety-binding region" description="N-palmitoyl cysteine" evidence="1">
    <location>
        <position position="25"/>
    </location>
</feature>
<feature type="lipid moiety-binding region" description="S-diacylglycerol cysteine" evidence="1">
    <location>
        <position position="25"/>
    </location>
</feature>
<accession>P75324</accession>
<proteinExistence type="inferred from homology"/>
<sequence length="569" mass="63118">MKFQRKYWGLLSTLGVSSAVALSACAAQARDVYVTSSASDLLKNNLVPMSMFNVSPTSSFFGSKYAGLTTYIATGSNKDDGVNVTSQTQEKLVLELATSVKGYKKKTSTASNMKTASVSSSSSSTGNNGSTEDEWEVVGSEIKRESGKGDNGKSITEDSNFQTISQQATRYEFTIDTSIKWVDNNGKPVKDEKGQEVKLSSKDFERGFEAYILSSELRFNRNGYFIDLMGLDVEKTVGMTNGKNGTQVKKMTTDSSSTQQSEEKKIEITDDNYDPEDYRSTSDDKFNVYLTSPFPFLLSMMSKEFFFPIPHTHPKVKAIKVGPNSPLVYNEKNSAKILDQTKTNFDGIYGGGGVNAWRDAWSVGPYYVESFNQSQIVFKRNKEYDDHITPNLPKTREGNEQPIPTMINYFQPGATPEVFYSNYIAGGLSSAGVSYSQQEDARSRFASTGDLRWVKVQKTAQSAQITYSSRPYILEGETVKTNSNITETEAKFLYNSESEEALTIRAGINGLINWQNLAIILLPNSGDLNYSIVPFGIFKEKGKDVQVKQKNTGQASQGSDLMNDYYYKI</sequence>
<name>Y459_MYCPN</name>
<dbReference type="EMBL" id="U00089">
    <property type="protein sequence ID" value="AAB96030.1"/>
    <property type="status" value="ALT_INIT"/>
    <property type="molecule type" value="Genomic_DNA"/>
</dbReference>
<dbReference type="PIR" id="S73708">
    <property type="entry name" value="S73708"/>
</dbReference>
<dbReference type="STRING" id="272634.MPN_459"/>
<dbReference type="EnsemblBacteria" id="AAB96030">
    <property type="protein sequence ID" value="AAB96030"/>
    <property type="gene ID" value="MPN_459"/>
</dbReference>
<dbReference type="KEGG" id="mpn:MPN_459"/>
<dbReference type="HOGENOM" id="CLU_461398_0_0_14"/>
<dbReference type="Proteomes" id="UP000000808">
    <property type="component" value="Chromosome"/>
</dbReference>
<dbReference type="GO" id="GO:0005886">
    <property type="term" value="C:plasma membrane"/>
    <property type="evidence" value="ECO:0007669"/>
    <property type="project" value="UniProtKB-SubCell"/>
</dbReference>
<dbReference type="Gene3D" id="3.90.76.10">
    <property type="entry name" value="Dipeptide-binding Protein, Domain 1"/>
    <property type="match status" value="1"/>
</dbReference>
<dbReference type="InterPro" id="IPR035158">
    <property type="entry name" value="DUF5396"/>
</dbReference>
<dbReference type="Pfam" id="PF17374">
    <property type="entry name" value="DUF5396"/>
    <property type="match status" value="1"/>
</dbReference>
<dbReference type="SUPFAM" id="SSF53850">
    <property type="entry name" value="Periplasmic binding protein-like II"/>
    <property type="match status" value="1"/>
</dbReference>
<dbReference type="PROSITE" id="PS51257">
    <property type="entry name" value="PROKAR_LIPOPROTEIN"/>
    <property type="match status" value="1"/>
</dbReference>
<comment type="subcellular location">
    <subcellularLocation>
        <location evidence="1">Cell membrane</location>
        <topology evidence="1">Lipid-anchor</topology>
    </subcellularLocation>
</comment>
<comment type="similarity">
    <text evidence="3">To M.pneumoniae MPN_456 and M.genitalium MG321 N-terminal region.</text>
</comment>
<comment type="sequence caution" evidence="3">
    <conflict type="erroneous initiation">
        <sequence resource="EMBL-CDS" id="AAB96030"/>
    </conflict>
</comment>
<evidence type="ECO:0000255" key="1">
    <source>
        <dbReference type="PROSITE-ProRule" id="PRU00303"/>
    </source>
</evidence>
<evidence type="ECO:0000256" key="2">
    <source>
        <dbReference type="SAM" id="MobiDB-lite"/>
    </source>
</evidence>
<evidence type="ECO:0000305" key="3"/>
<organism>
    <name type="scientific">Mycoplasma pneumoniae (strain ATCC 29342 / M129 / Subtype 1)</name>
    <name type="common">Mycoplasmoides pneumoniae</name>
    <dbReference type="NCBI Taxonomy" id="272634"/>
    <lineage>
        <taxon>Bacteria</taxon>
        <taxon>Bacillati</taxon>
        <taxon>Mycoplasmatota</taxon>
        <taxon>Mycoplasmoidales</taxon>
        <taxon>Mycoplasmoidaceae</taxon>
        <taxon>Mycoplasmoides</taxon>
    </lineage>
</organism>